<name>POLG_SALVA</name>
<feature type="chain" id="PRO_0000448019" description="Genome polyprotein">
    <location>
        <begin position="1"/>
        <end position="2374"/>
    </location>
</feature>
<feature type="chain" id="PRO_0000448020" description="Leader protein">
    <location>
        <begin position="1"/>
        <end position="114"/>
    </location>
</feature>
<feature type="chain" id="PRO_0000448021" description="Capsid protein VP0">
    <location>
        <begin position="115"/>
        <end position="482"/>
    </location>
</feature>
<feature type="chain" id="PRO_0000448022" description="Capsid protein VP3">
    <location>
        <begin position="483"/>
        <end position="705"/>
    </location>
</feature>
<feature type="chain" id="PRO_0000448023" description="Capsid protein VP1">
    <location>
        <begin position="706"/>
        <end position="955"/>
    </location>
</feature>
<feature type="chain" id="PRO_0000448024" description="Protein 2A">
    <location>
        <begin position="956"/>
        <end position="1100"/>
    </location>
</feature>
<feature type="chain" id="PRO_0000448025" description="Protein 2B">
    <location>
        <begin position="1101"/>
        <end position="1253"/>
    </location>
</feature>
<feature type="chain" id="PRO_0000448026" description="Protein 2C">
    <location>
        <begin position="1254"/>
        <end position="1599"/>
    </location>
</feature>
<feature type="chain" id="PRO_0000448027" description="Protein 3A">
    <location>
        <begin position="1600"/>
        <end position="1676"/>
    </location>
</feature>
<feature type="chain" id="PRO_0000448028" description="VPg">
    <location>
        <begin position="1677"/>
        <end position="1705"/>
    </location>
</feature>
<feature type="chain" id="PRO_0000448029" description="Protein 3CD">
    <location>
        <begin position="1706"/>
        <end position="2366"/>
    </location>
</feature>
<feature type="chain" id="PRO_0000448030" description="Protease 3C">
    <location>
        <begin position="1706"/>
        <end position="1900"/>
    </location>
</feature>
<feature type="chain" id="PRO_0000448031" description="RNA-directed RNA polymerase">
    <location>
        <begin position="1901"/>
        <end position="2366"/>
    </location>
</feature>
<feature type="transmembrane region" description="Helical" evidence="7">
    <location>
        <begin position="1649"/>
        <end position="1669"/>
    </location>
</feature>
<feature type="domain" description="SF3 helicase" evidence="9">
    <location>
        <begin position="1361"/>
        <end position="1525"/>
    </location>
</feature>
<feature type="domain" description="Peptidase C3" evidence="10">
    <location>
        <begin position="1700"/>
        <end position="1889"/>
    </location>
</feature>
<feature type="domain" description="RdRp catalytic" evidence="8">
    <location>
        <begin position="2126"/>
        <end position="2243"/>
    </location>
</feature>
<feature type="region of interest" description="Disordered" evidence="11">
    <location>
        <begin position="144"/>
        <end position="176"/>
    </location>
</feature>
<feature type="region of interest" description="Disordered" evidence="11">
    <location>
        <begin position="707"/>
        <end position="739"/>
    </location>
</feature>
<feature type="region of interest" description="Disordered" evidence="11">
    <location>
        <begin position="1677"/>
        <end position="1699"/>
    </location>
</feature>
<feature type="compositionally biased region" description="Low complexity" evidence="11">
    <location>
        <begin position="157"/>
        <end position="174"/>
    </location>
</feature>
<feature type="compositionally biased region" description="Polar residues" evidence="11">
    <location>
        <begin position="716"/>
        <end position="728"/>
    </location>
</feature>
<feature type="active site" description="For protease 3C activity" evidence="10">
    <location>
        <position position="1748"/>
    </location>
</feature>
<feature type="active site" description="For protease 3C activity" evidence="10">
    <location>
        <position position="1779"/>
    </location>
</feature>
<feature type="active site" description="For protease 3C activity" evidence="10">
    <location>
        <position position="1852"/>
    </location>
</feature>
<feature type="active site" description="For RdRp activity" evidence="6">
    <location>
        <position position="2132"/>
    </location>
</feature>
<feature type="active site" description="For RdRp activity" evidence="6">
    <location>
        <position position="2229"/>
    </location>
</feature>
<feature type="binding site" evidence="9">
    <location>
        <begin position="1387"/>
        <end position="1394"/>
    </location>
    <ligand>
        <name>ATP</name>
        <dbReference type="ChEBI" id="CHEBI:30616"/>
    </ligand>
</feature>
<feature type="site" description="Cleavage; by protease 3C" evidence="12">
    <location>
        <begin position="114"/>
        <end position="115"/>
    </location>
</feature>
<feature type="site" description="Cleavage; by protease 3C" evidence="5">
    <location>
        <begin position="482"/>
        <end position="483"/>
    </location>
</feature>
<feature type="site" description="Cleavage; by protease 3C" evidence="5">
    <location>
        <begin position="705"/>
        <end position="706"/>
    </location>
</feature>
<feature type="site" description="Cleavage; by protein 3CD" evidence="3">
    <location>
        <begin position="955"/>
        <end position="956"/>
    </location>
</feature>
<feature type="site" description="Cleavage; by protease 3C" evidence="5">
    <location>
        <begin position="1100"/>
        <end position="1101"/>
    </location>
</feature>
<feature type="site" description="Cleavage; by protease 3C" evidence="5">
    <location>
        <begin position="1253"/>
        <end position="1254"/>
    </location>
</feature>
<feature type="site" description="Cleavage; by protease 3C" evidence="5">
    <location>
        <begin position="1599"/>
        <end position="1600"/>
    </location>
</feature>
<feature type="site" description="Cleavage; by protease 3C" evidence="5">
    <location>
        <begin position="1676"/>
        <end position="1677"/>
    </location>
</feature>
<feature type="site" description="Cleavage; by protease 3C" evidence="5">
    <location>
        <begin position="1705"/>
        <end position="1706"/>
    </location>
</feature>
<feature type="site" description="Cleavage; by protease 3C" evidence="5">
    <location>
        <begin position="1900"/>
        <end position="1901"/>
    </location>
</feature>
<feature type="modified residue" description="O-(5'-phospho-RNA)-tyrosine" evidence="4">
    <location>
        <position position="1679"/>
    </location>
</feature>
<feature type="lipid moiety-binding region" description="N-myristoyl glycine; by host" evidence="4">
    <location>
        <position position="115"/>
    </location>
</feature>
<feature type="lipid moiety-binding region" description="N-myristoyl glycine; by host" evidence="2">
    <location>
        <position position="1600"/>
    </location>
</feature>
<sequence length="2374" mass="255475">MEGSNGFSSSLAGLSSSRSSLRLLTHFLSLPTLPVNIYLNARRHSGWYRSPPTLPVNIYLNEQFDNLCLAALRYPGHKLYPSVHTLFPDVSPLKIPHSVPAFAHLVQRQGLRRQGNSITNIYGNGNDVTTDVGANGMSLPIAVGDMPTASTSEAPLGSNKGGSSTSPKSTSNGNVVRGSRYSKWWEPAAARALDRALDHAVDATDAVAGAASKGIKAGAAKLSNKLSGSQTTALLALPGNIAGGAPSATVNANNTSISSQALLPSVNPYPSTPAVSLPNPDAPTQVGPAADRQWLVDTLSWSETIAPLTVFSGPKALTPGVYPPTIEPNTGVYPLPAALCVSHPESVFSTAYNAHAYFNCGFDVTVVVNASQFHGGSLIVLAMAEGLGDITPADSSTWFNFPHTIINLANSNAATLKLPYIGVTPNTSTEGLHNYWTILFAPLTPLAVPTGSPTTVKVSLFVSPIDSAFYGLRFPVPFPAPQHWKTRAVPGAGTYGSVVAGQEIPLVGYAPAAPPRDYLPGRVHNWLEYAARHSWERNLTWTSADEVGDQLVSYPIQPEALANTQTNTAFVLSLFSQWRGSLQISLIFTGPAQCYGRLLLAYTPPSANPPTTIDEANNGTYDVWDVNGDSTYTFTIPFCSQAYWKTVDIGTSSGLVSNNGYFTVFVMNPLVTPGPSPPSATVAAFLHVADDFDVRLPQCPALGFQSGADGAEVQPAPTSDLSDGNPTTDPAPRDNFDYPHHPVDPSTDLAFYFSQYRWFGLNESLTPLDATGGLFYHISLNPINFQQSSLLSVLGAFTYVYANLSLNINVSAPSQPCTFYVFYAPPGASVPSVQTLAELSFFTHTATPLNLAAPTNITVSIPYSSPQSVLCTSFGGFGLQNGGDAGNLHSNTWGTLILYVDLPQSDSVSVSAYISFRDFEAYVPRQTPGVGPVPTSTSIVRVARPTPKPRTARRQGGTLADLILSPESRCFIVAHTTAPFYSILLVNPDEEYAISMFSHGDESILQYSSRSGTRLTPTAPAFFLCAAASVDTVLPYSISQSHLWLTDLTGIPLRAVPPLTLFLSAGAALCAGAQTLIAVAQGGSTPETPPTPNRALLRRQGLGDLPDAAKGLSAALESVARVAGDANIATSSQAIATSINSLSNSIDGATSFMQNFFSGLAPRNPTSPLQHLFAKLIKWVTKIIGSLIIICNNPTPSALIGVSLMLCGDLAEDITEFFSNLGNPLAAVFYRCARALGLSPTPQSAAQAAGGRQGVRDYNDIMSALRNTDWFFEKIMTHIKNLLEWLGVLVKDDPRTKLNGQHEKILELYTDSVTASSTPPSELSADAIRSNLDLAKQLLTLSHAANSVTHIQLCTRAITNYSTALSAISLVGTPGTRPEPLVVYLYGPPGTGKSLLASLLASTLAQALSGDPNNYYSPSSPDCKFYDGYSGQPVHYIDDIGQDPDGADWADFVNIVSSAPFIVPMADVNDKGRFYTSRVVIVTSNFPGPNPRSARCVAALERRLHIRLNVTARDGVAFSAAAALQPSNPPSATRYCKFANPLTQFSMFNLAVDYKSVVLPNTPLTCFDELVDFVLSSLRDRASVNSLLSGMVRTDVTRQGGNADAPAPSAAPLPSVIPSVPSQDPFTRAVNENRPVSFLSKIWSWRAPIFAASSFLSLIAATLTIVRCLRDLRSTQGAYSGTPVPKPRKKDLPKQPVYSGPVRRQGFDPAVMKIMGNVDSFVTLSGTKPIWTMSCLWIGGRNLIAPSHAFVSDEYEITHIRVGSRTLDVSRVTRVDDGELSLLSVPDGPEHKSLIRYIRSASPKSGILASKFSDTPVFVSFWNGKSHSTPLPGVVDEKDSFTYRCSSFQGLCGSPMIATDPGGLGILGIHVAGVAGYNGFSARLTPERVQAFLSHLATPQSVLYFHPPMGPPAHVSRRSRLHPIPPAFGAFPITKEPAALSRKDPRLPEGTDLDAITLAKHDKGDIATPWPCMEEAADWYFSQLPDNLPVLSQEDAIRGLDHMDAIDLSQSPGYPWTTQGRSRRSLFDEDGNPLPELQEAIDSVWDGGSYIYQSFLKDELRPTAKARAGKTRIVEAAPIQAIVVGRRLLGSLINHLQGNPLQHGSAVGCNPDIHWTQIFHSLTSFSNVWSIDYSCFDATIPSVLLSAIASRIAARSDQPGRVLDYLSYTTTSYHVYDSLWYTMIGGNPSGCVGTSILNTIANNIAVISAMMYCNKFDPRDPPVLYCYGDDLIWGSNQDFHPRELQAFYQKFTNFVVTPADKASDFPDSSSIFDITFLKRYFVPDDIHPHLIHPVMDEQTLTNSIMWLRGGEFEEVLRSLETLAFHSGPKNYSAWCEKIKAKIRENGCDATFTPYSVLQRGWVSTCMTGPYPLTG</sequence>
<accession>C5MSH2</accession>
<organism>
    <name type="scientific">Salivirus A (isolate Human/Nigeria/NG-J1/2007)</name>
    <name type="common">SV-A</name>
    <dbReference type="NCBI Taxonomy" id="651733"/>
    <lineage>
        <taxon>Viruses</taxon>
        <taxon>Riboviria</taxon>
        <taxon>Orthornavirae</taxon>
        <taxon>Pisuviricota</taxon>
        <taxon>Pisoniviricetes</taxon>
        <taxon>Picornavirales</taxon>
        <taxon>Picornaviridae</taxon>
        <taxon>Kodimesavirinae</taxon>
        <taxon>Salivirus</taxon>
        <taxon>Salivirus A</taxon>
    </lineage>
</organism>
<keyword id="KW-0067">ATP-binding</keyword>
<keyword id="KW-0167">Capsid protein</keyword>
<keyword id="KW-0191">Covalent protein-RNA linkage</keyword>
<keyword id="KW-1262">Eukaryotic host gene expression shutoff by virus</keyword>
<keyword id="KW-1193">Eukaryotic host translation shutoff by virus</keyword>
<keyword id="KW-0347">Helicase</keyword>
<keyword id="KW-1035">Host cytoplasm</keyword>
<keyword id="KW-1036">Host cytoplasmic vesicle</keyword>
<keyword id="KW-1190">Host gene expression shutoff by virus</keyword>
<keyword id="KW-1040">Host Golgi apparatus</keyword>
<keyword id="KW-1043">Host membrane</keyword>
<keyword id="KW-1192">Host mRNA suppression by virus</keyword>
<keyword id="KW-0945">Host-virus interaction</keyword>
<keyword id="KW-0378">Hydrolase</keyword>
<keyword id="KW-1099">Inhibition of host mRNA nuclear export by virus</keyword>
<keyword id="KW-0407">Ion channel</keyword>
<keyword id="KW-0406">Ion transport</keyword>
<keyword id="KW-0449">Lipoprotein</keyword>
<keyword id="KW-0472">Membrane</keyword>
<keyword id="KW-0519">Myristate</keyword>
<keyword id="KW-0547">Nucleotide-binding</keyword>
<keyword id="KW-0548">Nucleotidyltransferase</keyword>
<keyword id="KW-0597">Phosphoprotein</keyword>
<keyword id="KW-0645">Protease</keyword>
<keyword id="KW-1185">Reference proteome</keyword>
<keyword id="KW-0694">RNA-binding</keyword>
<keyword id="KW-0696">RNA-directed RNA polymerase</keyword>
<keyword id="KW-1143">T=pseudo3 icosahedral capsid protein</keyword>
<keyword id="KW-0788">Thiol protease</keyword>
<keyword id="KW-0808">Transferase</keyword>
<keyword id="KW-0812">Transmembrane</keyword>
<keyword id="KW-1133">Transmembrane helix</keyword>
<keyword id="KW-0813">Transport</keyword>
<keyword id="KW-1161">Viral attachment to host cell</keyword>
<keyword id="KW-1182">Viral ion channel</keyword>
<keyword id="KW-0693">Viral RNA replication</keyword>
<keyword id="KW-0946">Virion</keyword>
<keyword id="KW-1160">Virus entry into host cell</keyword>
<evidence type="ECO:0000250" key="1"/>
<evidence type="ECO:0000250" key="2">
    <source>
        <dbReference type="UniProtKB" id="C6KEF6"/>
    </source>
</evidence>
<evidence type="ECO:0000250" key="3">
    <source>
        <dbReference type="UniProtKB" id="O91464"/>
    </source>
</evidence>
<evidence type="ECO:0000250" key="4">
    <source>
        <dbReference type="UniProtKB" id="P03300"/>
    </source>
</evidence>
<evidence type="ECO:0000250" key="5">
    <source>
        <dbReference type="UniProtKB" id="P03304"/>
    </source>
</evidence>
<evidence type="ECO:0000250" key="6">
    <source>
        <dbReference type="UniProtKB" id="P12296"/>
    </source>
</evidence>
<evidence type="ECO:0000255" key="7"/>
<evidence type="ECO:0000255" key="8">
    <source>
        <dbReference type="PROSITE-ProRule" id="PRU00539"/>
    </source>
</evidence>
<evidence type="ECO:0000255" key="9">
    <source>
        <dbReference type="PROSITE-ProRule" id="PRU00551"/>
    </source>
</evidence>
<evidence type="ECO:0000255" key="10">
    <source>
        <dbReference type="PROSITE-ProRule" id="PRU01222"/>
    </source>
</evidence>
<evidence type="ECO:0000256" key="11">
    <source>
        <dbReference type="SAM" id="MobiDB-lite"/>
    </source>
</evidence>
<evidence type="ECO:0000305" key="12"/>
<proteinExistence type="inferred from homology"/>
<protein>
    <recommendedName>
        <fullName>Genome polyprotein</fullName>
    </recommendedName>
    <component>
        <recommendedName>
            <fullName>Leader protein</fullName>
            <shortName>L</shortName>
        </recommendedName>
    </component>
    <component>
        <recommendedName>
            <fullName>Capsid protein VP0</fullName>
        </recommendedName>
    </component>
    <component>
        <recommendedName>
            <fullName>Capsid protein VP3</fullName>
        </recommendedName>
        <alternativeName>
            <fullName>P1C</fullName>
        </alternativeName>
        <alternativeName>
            <fullName>Virion protein 3</fullName>
        </alternativeName>
    </component>
    <component>
        <recommendedName>
            <fullName>Capsid protein VP1</fullName>
        </recommendedName>
        <alternativeName>
            <fullName>P1D</fullName>
        </alternativeName>
        <alternativeName>
            <fullName>Virion protein 1</fullName>
        </alternativeName>
    </component>
    <component>
        <recommendedName>
            <fullName>Protein 2A</fullName>
            <shortName>P2A</shortName>
        </recommendedName>
    </component>
    <component>
        <recommendedName>
            <fullName>Protein 2B</fullName>
            <shortName>P2B</shortName>
        </recommendedName>
    </component>
    <component>
        <recommendedName>
            <fullName>Protein 2C</fullName>
            <shortName>P2C</shortName>
            <ecNumber evidence="4">3.6.4.13</ecNumber>
        </recommendedName>
    </component>
    <component>
        <recommendedName>
            <fullName>Protein 3A</fullName>
            <shortName>P3A</shortName>
        </recommendedName>
    </component>
    <component>
        <recommendedName>
            <fullName>VPg</fullName>
            <shortName>P3B</shortName>
        </recommendedName>
        <alternativeName>
            <fullName>Protein 3B</fullName>
        </alternativeName>
    </component>
    <component>
        <recommendedName>
            <fullName>Protein 3CD</fullName>
            <ecNumber>3.4.22.28</ecNumber>
        </recommendedName>
    </component>
    <component>
        <recommendedName>
            <fullName evidence="10">Protease 3C</fullName>
            <ecNumber evidence="10">3.4.22.28</ecNumber>
        </recommendedName>
        <alternativeName>
            <fullName evidence="10">Picornain 3C</fullName>
            <shortName evidence="10">P3C</shortName>
        </alternativeName>
    </component>
    <component>
        <recommendedName>
            <fullName>RNA-directed RNA polymerase</fullName>
            <shortName>RdRp</shortName>
            <ecNumber evidence="8">2.7.7.48</ecNumber>
        </recommendedName>
        <alternativeName>
            <fullName>3D polymerase</fullName>
            <shortName>3Dpol</shortName>
        </alternativeName>
        <alternativeName>
            <fullName>Protein 3D</fullName>
            <shortName>3D</shortName>
        </alternativeName>
    </component>
</protein>
<dbReference type="EC" id="3.6.4.13" evidence="4"/>
<dbReference type="EC" id="3.4.22.28" evidence="10"/>
<dbReference type="EC" id="2.7.7.48" evidence="8"/>
<dbReference type="EMBL" id="GQ179640">
    <property type="protein sequence ID" value="ACS32214.2"/>
    <property type="molecule type" value="Genomic_RNA"/>
</dbReference>
<dbReference type="RefSeq" id="YP_003038594.1">
    <property type="nucleotide sequence ID" value="NC_012957.1"/>
</dbReference>
<dbReference type="SMR" id="C5MSH2"/>
<dbReference type="DNASU" id="11242466"/>
<dbReference type="GeneID" id="11242466"/>
<dbReference type="KEGG" id="vg:11242466"/>
<dbReference type="Proteomes" id="UP000029742">
    <property type="component" value="Segment"/>
</dbReference>
<dbReference type="GO" id="GO:0044162">
    <property type="term" value="C:host cell cytoplasmic vesicle membrane"/>
    <property type="evidence" value="ECO:0007669"/>
    <property type="project" value="UniProtKB-SubCell"/>
</dbReference>
<dbReference type="GO" id="GO:0044178">
    <property type="term" value="C:host cell Golgi membrane"/>
    <property type="evidence" value="ECO:0007669"/>
    <property type="project" value="UniProtKB-SubCell"/>
</dbReference>
<dbReference type="GO" id="GO:0016020">
    <property type="term" value="C:membrane"/>
    <property type="evidence" value="ECO:0007669"/>
    <property type="project" value="UniProtKB-KW"/>
</dbReference>
<dbReference type="GO" id="GO:0039618">
    <property type="term" value="C:T=pseudo3 icosahedral viral capsid"/>
    <property type="evidence" value="ECO:0007669"/>
    <property type="project" value="UniProtKB-KW"/>
</dbReference>
<dbReference type="GO" id="GO:0005524">
    <property type="term" value="F:ATP binding"/>
    <property type="evidence" value="ECO:0007669"/>
    <property type="project" value="UniProtKB-KW"/>
</dbReference>
<dbReference type="GO" id="GO:0016887">
    <property type="term" value="F:ATP hydrolysis activity"/>
    <property type="evidence" value="ECO:0007669"/>
    <property type="project" value="RHEA"/>
</dbReference>
<dbReference type="GO" id="GO:0015267">
    <property type="term" value="F:channel activity"/>
    <property type="evidence" value="ECO:0007669"/>
    <property type="project" value="UniProtKB-KW"/>
</dbReference>
<dbReference type="GO" id="GO:0004197">
    <property type="term" value="F:cysteine-type endopeptidase activity"/>
    <property type="evidence" value="ECO:0007669"/>
    <property type="project" value="UniProtKB-EC"/>
</dbReference>
<dbReference type="GO" id="GO:0003723">
    <property type="term" value="F:RNA binding"/>
    <property type="evidence" value="ECO:0007669"/>
    <property type="project" value="UniProtKB-KW"/>
</dbReference>
<dbReference type="GO" id="GO:0003724">
    <property type="term" value="F:RNA helicase activity"/>
    <property type="evidence" value="ECO:0007669"/>
    <property type="project" value="UniProtKB-EC"/>
</dbReference>
<dbReference type="GO" id="GO:0003968">
    <property type="term" value="F:RNA-directed RNA polymerase activity"/>
    <property type="evidence" value="ECO:0007669"/>
    <property type="project" value="UniProtKB-KW"/>
</dbReference>
<dbReference type="GO" id="GO:0005198">
    <property type="term" value="F:structural molecule activity"/>
    <property type="evidence" value="ECO:0007669"/>
    <property type="project" value="InterPro"/>
</dbReference>
<dbReference type="GO" id="GO:0006351">
    <property type="term" value="P:DNA-templated transcription"/>
    <property type="evidence" value="ECO:0007669"/>
    <property type="project" value="InterPro"/>
</dbReference>
<dbReference type="GO" id="GO:0034220">
    <property type="term" value="P:monoatomic ion transmembrane transport"/>
    <property type="evidence" value="ECO:0007669"/>
    <property type="project" value="UniProtKB-KW"/>
</dbReference>
<dbReference type="GO" id="GO:0006508">
    <property type="term" value="P:proteolysis"/>
    <property type="evidence" value="ECO:0007669"/>
    <property type="project" value="UniProtKB-KW"/>
</dbReference>
<dbReference type="GO" id="GO:0046718">
    <property type="term" value="P:symbiont entry into host cell"/>
    <property type="evidence" value="ECO:0007669"/>
    <property type="project" value="UniProtKB-KW"/>
</dbReference>
<dbReference type="GO" id="GO:0039522">
    <property type="term" value="P:symbiont-mediated suppression of host mRNA export from nucleus"/>
    <property type="evidence" value="ECO:0007669"/>
    <property type="project" value="UniProtKB-KW"/>
</dbReference>
<dbReference type="GO" id="GO:0039694">
    <property type="term" value="P:viral RNA genome replication"/>
    <property type="evidence" value="ECO:0007669"/>
    <property type="project" value="InterPro"/>
</dbReference>
<dbReference type="GO" id="GO:0019062">
    <property type="term" value="P:virion attachment to host cell"/>
    <property type="evidence" value="ECO:0007669"/>
    <property type="project" value="UniProtKB-KW"/>
</dbReference>
<dbReference type="CDD" id="cd00205">
    <property type="entry name" value="rhv_like"/>
    <property type="match status" value="3"/>
</dbReference>
<dbReference type="Gene3D" id="1.20.960.20">
    <property type="match status" value="1"/>
</dbReference>
<dbReference type="Gene3D" id="2.60.120.20">
    <property type="match status" value="3"/>
</dbReference>
<dbReference type="Gene3D" id="3.30.70.270">
    <property type="match status" value="2"/>
</dbReference>
<dbReference type="Gene3D" id="2.40.10.10">
    <property type="entry name" value="Trypsin-like serine proteases"/>
    <property type="match status" value="2"/>
</dbReference>
<dbReference type="InterPro" id="IPR043502">
    <property type="entry name" value="DNA/RNA_pol_sf"/>
</dbReference>
<dbReference type="InterPro" id="IPR004004">
    <property type="entry name" value="Helic/Pol/Pept_Calicivir-typ"/>
</dbReference>
<dbReference type="InterPro" id="IPR000605">
    <property type="entry name" value="Helicase_SF3_ssDNA/RNA_vir"/>
</dbReference>
<dbReference type="InterPro" id="IPR014759">
    <property type="entry name" value="Helicase_SF3_ssRNA_vir"/>
</dbReference>
<dbReference type="InterPro" id="IPR027417">
    <property type="entry name" value="P-loop_NTPase"/>
</dbReference>
<dbReference type="InterPro" id="IPR044067">
    <property type="entry name" value="PCV_3C_PRO"/>
</dbReference>
<dbReference type="InterPro" id="IPR009003">
    <property type="entry name" value="Peptidase_S1_PA"/>
</dbReference>
<dbReference type="InterPro" id="IPR043504">
    <property type="entry name" value="Peptidase_S1_PA_chymotrypsin"/>
</dbReference>
<dbReference type="InterPro" id="IPR001676">
    <property type="entry name" value="Picornavirus_capsid"/>
</dbReference>
<dbReference type="InterPro" id="IPR043128">
    <property type="entry name" value="Rev_trsase/Diguanyl_cyclase"/>
</dbReference>
<dbReference type="InterPro" id="IPR033703">
    <property type="entry name" value="Rhv-like"/>
</dbReference>
<dbReference type="InterPro" id="IPR001205">
    <property type="entry name" value="RNA-dir_pol_C"/>
</dbReference>
<dbReference type="InterPro" id="IPR007094">
    <property type="entry name" value="RNA-dir_pol_PSvirus"/>
</dbReference>
<dbReference type="InterPro" id="IPR029053">
    <property type="entry name" value="Viral_coat"/>
</dbReference>
<dbReference type="Pfam" id="PF00680">
    <property type="entry name" value="RdRP_1"/>
    <property type="match status" value="1"/>
</dbReference>
<dbReference type="Pfam" id="PF00073">
    <property type="entry name" value="Rhv"/>
    <property type="match status" value="2"/>
</dbReference>
<dbReference type="Pfam" id="PF22663">
    <property type="entry name" value="Rhv_5"/>
    <property type="match status" value="1"/>
</dbReference>
<dbReference type="Pfam" id="PF00910">
    <property type="entry name" value="RNA_helicase"/>
    <property type="match status" value="1"/>
</dbReference>
<dbReference type="PRINTS" id="PR00918">
    <property type="entry name" value="CALICVIRUSNS"/>
</dbReference>
<dbReference type="SUPFAM" id="SSF56672">
    <property type="entry name" value="DNA/RNA polymerases"/>
    <property type="match status" value="1"/>
</dbReference>
<dbReference type="SUPFAM" id="SSF52540">
    <property type="entry name" value="P-loop containing nucleoside triphosphate hydrolases"/>
    <property type="match status" value="1"/>
</dbReference>
<dbReference type="SUPFAM" id="SSF88633">
    <property type="entry name" value="Positive stranded ssRNA viruses"/>
    <property type="match status" value="2"/>
</dbReference>
<dbReference type="SUPFAM" id="SSF50494">
    <property type="entry name" value="Trypsin-like serine proteases"/>
    <property type="match status" value="1"/>
</dbReference>
<dbReference type="PROSITE" id="PS51874">
    <property type="entry name" value="PCV_3C_PRO"/>
    <property type="match status" value="1"/>
</dbReference>
<dbReference type="PROSITE" id="PS50507">
    <property type="entry name" value="RDRP_SSRNA_POS"/>
    <property type="match status" value="1"/>
</dbReference>
<dbReference type="PROSITE" id="PS51218">
    <property type="entry name" value="SF3_HELICASE_2"/>
    <property type="match status" value="1"/>
</dbReference>
<organismHost>
    <name type="scientific">Homo sapiens</name>
    <name type="common">Human</name>
    <dbReference type="NCBI Taxonomy" id="9606"/>
</organismHost>
<organismHost>
    <name type="scientific">Pan troglodytes</name>
    <name type="common">Chimpanzee</name>
    <dbReference type="NCBI Taxonomy" id="9598"/>
</organismHost>
<reference key="1">
    <citation type="journal article" date="2009" name="J. Virol.">
        <title>A novel picornavirus associated with gastroenteritis.</title>
        <authorList>
            <person name="Li L."/>
            <person name="Victoria J."/>
            <person name="Kapoor A."/>
            <person name="Blinkova O."/>
            <person name="Wang C."/>
            <person name="Babrzadeh F."/>
            <person name="Mason C.J."/>
            <person name="Pandey P."/>
            <person name="Triki H."/>
            <person name="Bahri O."/>
            <person name="Oderinde B.S."/>
            <person name="Baba M.M."/>
            <person name="Bukbuk D.N."/>
            <person name="Besser J.M."/>
            <person name="Bartkus J.M."/>
            <person name="Delwart E.L."/>
        </authorList>
    </citation>
    <scope>NUCLEOTIDE SEQUENCE [LARGE SCALE GENOMIC DNA]</scope>
</reference>
<comment type="function">
    <molecule>Leader protein</molecule>
    <text evidence="3">Required for viral RNA replication and viral RNA encapsidation (By similarity). Does not have any proteolytic activity (By similarity).</text>
</comment>
<comment type="function">
    <molecule>Capsid protein VP1</molecule>
    <text evidence="3">Forms an icosahedral capsid of pseudo T=3 symmetry with capsid proteins VP0 and VP3 (By similarity). Together they form an icosahedral capsid composed of 60 copies of each VP0, VP1, and VP3 (By similarity). All the three latter proteins contain a beta-sheet structure called beta-barrel jelly roll (By similarity).</text>
</comment>
<comment type="function">
    <molecule>Capsid protein VP0</molecule>
    <text evidence="3">Forms an icosahedral capsid of pseudo T=3 symmetry with capsid proteins VP1 and VP3 (By similarity). Together they form an icosahedral capsid composed of 60 copies of each VP0, VP1, and VP3 (By similarity). All the three latter proteins contain a beta-sheet structure called beta-barrel jelly roll (By similarity).</text>
</comment>
<comment type="function">
    <molecule>Capsid protein VP3</molecule>
    <text evidence="3">Forms an icosahedral capsid of pseudo T=3 symmetry with capsid proteins VP0 and VP1 (By similarity). Together they form an icosahedral capsid composed of 60 copies of each VP0, VP1, and VP3 (By similarity). All the three latter proteins contain a beta-sheet structure called beta-barrel jelly roll (By similarity).</text>
</comment>
<comment type="function">
    <molecule>Protein 2A</molecule>
    <text evidence="3">Required for viral RNA replication (By similarity). Does not have any proteolytic activity (By similarity).</text>
</comment>
<comment type="function">
    <molecule>Protein 2B</molecule>
    <text evidence="1">Affects membrane integrity and causes an increase in membrane permeability.</text>
</comment>
<comment type="function">
    <molecule>Protein 2C</molecule>
    <text evidence="4">Induces and associates with structural rearrangements of intracellular membranes. Displays RNA-binding, nucleotide binding and NTPase activities. May play a role in virion morphogenesis and viral RNA encapsidation by interacting with the capsid protein VP3.</text>
</comment>
<comment type="function">
    <molecule>Protein 3A</molecule>
    <text evidence="3">Serves as membrane anchor via its hydrophobic domain. Plays an essential role in viral RNA replication by recruiting PI4KB at the viral replication sites, thereby allowing the formation of rearranged membranous structures where viral replication takes place (By similarity).</text>
</comment>
<comment type="function">
    <molecule>VPg</molecule>
    <text evidence="5">Forms a primer, VPg-pU, which is utilized by the polymerase for the initiation of RNA chains.</text>
</comment>
<comment type="function">
    <molecule>Protease 3C</molecule>
    <text evidence="5 6">Cysteine protease that generates mature viral proteins from the precursor polyprotein (By similarity). In addition to its proteolytic activity, it binds to viral RNA, and thus influences viral genome replication. RNA and substrate cooperatively bind to the protease (By similarity).</text>
</comment>
<comment type="function">
    <molecule>RNA-directed RNA polymerase</molecule>
    <text evidence="6">Replicates the genomic and antigenomic RNAs by recognizing replications specific signals (By similarity). Performs VPg uridylylation (By similarity).</text>
</comment>
<comment type="catalytic activity">
    <reaction evidence="10">
        <text>Selective cleavage of Gln-|-Gly bond in the poliovirus polyprotein. In other picornavirus reactions Glu may be substituted for Gln, and Ser or Thr for Gly.</text>
        <dbReference type="EC" id="3.4.22.28"/>
    </reaction>
</comment>
<comment type="catalytic activity">
    <reaction evidence="8">
        <text>RNA(n) + a ribonucleoside 5'-triphosphate = RNA(n+1) + diphosphate</text>
        <dbReference type="Rhea" id="RHEA:21248"/>
        <dbReference type="Rhea" id="RHEA-COMP:14527"/>
        <dbReference type="Rhea" id="RHEA-COMP:17342"/>
        <dbReference type="ChEBI" id="CHEBI:33019"/>
        <dbReference type="ChEBI" id="CHEBI:61557"/>
        <dbReference type="ChEBI" id="CHEBI:140395"/>
        <dbReference type="EC" id="2.7.7.48"/>
    </reaction>
</comment>
<comment type="catalytic activity">
    <reaction evidence="4">
        <text>ATP + H2O = ADP + phosphate + H(+)</text>
        <dbReference type="Rhea" id="RHEA:13065"/>
        <dbReference type="ChEBI" id="CHEBI:15377"/>
        <dbReference type="ChEBI" id="CHEBI:15378"/>
        <dbReference type="ChEBI" id="CHEBI:30616"/>
        <dbReference type="ChEBI" id="CHEBI:43474"/>
        <dbReference type="ChEBI" id="CHEBI:456216"/>
        <dbReference type="EC" id="3.6.4.13"/>
    </reaction>
</comment>
<comment type="subunit">
    <molecule>Capsid protein VP0</molecule>
    <text evidence="3">Interacts with capsid protein VP1 (By similarity). Interacts with capsid protein VP3 (By similarity).</text>
</comment>
<comment type="subunit">
    <molecule>Capsid protein VP1</molecule>
    <text evidence="3">Interacts with capsid protein VP0 (By similarity). Interacts with capsid protein VP3 (By similarity).</text>
</comment>
<comment type="subunit">
    <molecule>Capsid protein VP3</molecule>
    <text evidence="3">Interacts with capsid protein VP0 (By similarity). Interacts with capsid protein VP1 (By similarity).</text>
</comment>
<comment type="subunit">
    <molecule>Protein 2A</molecule>
    <text evidence="3">Homodimer (By similarity). Interacts with protein 2B (By similarity). Interacts with protein 2C (By similarity).</text>
</comment>
<comment type="subunit">
    <molecule>Protein 2B</molecule>
    <text evidence="3">Homodimer. Interacts with host ABCD3 (By similarity). Interacts with protein 2A (By similarity). Interacts with host ACBD3 (By similarity).</text>
</comment>
<comment type="subunit">
    <molecule>Protein 2C</molecule>
    <text evidence="3">Homodimer. Interacts with host ABCD3 (By similarity). Interacts with protein 2A (By similarity). Interacts with protein 3A (By similarity). Interacts with protein 3C (By similarity). Interacts with host ACBD3 (By similarity).</text>
</comment>
<comment type="subunit">
    <molecule>Protein 3A</molecule>
    <text evidence="3">Homodimer (By similarity). Interacts with host ABCD3 (via GOLD domain) and PI4KB; these interactions allow the formation of a viral protein/ACBD3/PI4KB complex in order to synthesize PI4P at the viral RNA replication sites (By similarity). Interacts with protein 2C (By similarity). Interacts with protein 3C (By similarity). Protein 3C: Interacts with protein 2A (By similarity). Protein 3C: Interacts with protein 2C (By similarity).</text>
</comment>
<comment type="subcellular location">
    <molecule>Capsid protein VP0</molecule>
    <subcellularLocation>
        <location evidence="3">Virion</location>
    </subcellularLocation>
    <subcellularLocation>
        <location evidence="6">Host cytoplasm</location>
    </subcellularLocation>
</comment>
<comment type="subcellular location">
    <molecule>Capsid protein VP3</molecule>
    <subcellularLocation>
        <location evidence="3">Virion</location>
    </subcellularLocation>
    <subcellularLocation>
        <location evidence="6">Host cytoplasm</location>
    </subcellularLocation>
</comment>
<comment type="subcellular location">
    <molecule>Capsid protein VP1</molecule>
    <subcellularLocation>
        <location evidence="3">Virion</location>
    </subcellularLocation>
    <subcellularLocation>
        <location evidence="6">Host cytoplasm</location>
    </subcellularLocation>
</comment>
<comment type="subcellular location">
    <molecule>Protein 2B</molecule>
    <subcellularLocation>
        <location evidence="5">Host cytoplasmic vesicle membrane</location>
        <topology evidence="5">Peripheral membrane protein</topology>
        <orientation evidence="5">Cytoplasmic side</orientation>
    </subcellularLocation>
    <text evidence="5">Probably localizes to the surface of intracellular membrane vesicles that are induced after virus infection as the site for viral RNA replication. These vesicles are probably autophagosome-like vesicles.</text>
</comment>
<comment type="subcellular location">
    <molecule>Protein 2C</molecule>
    <subcellularLocation>
        <location evidence="5">Host cytoplasmic vesicle membrane</location>
        <topology evidence="5">Peripheral membrane protein</topology>
        <orientation evidence="5">Cytoplasmic side</orientation>
    </subcellularLocation>
    <text evidence="5">Probably localizes to the surface of intracellular membrane vesicles that are induced after virus infection as the site for viral RNA replication. These vesicles are probably autophagosome-like vesicles.</text>
</comment>
<comment type="subcellular location">
    <molecule>Protein 3A</molecule>
    <subcellularLocation>
        <location evidence="5">Host cytoplasmic vesicle membrane</location>
        <topology evidence="7">Single-pass membrane protein</topology>
    </subcellularLocation>
    <subcellularLocation>
        <location evidence="3">Host Golgi apparatus membrane</location>
        <topology evidence="7">Single-pass membrane protein</topology>
    </subcellularLocation>
    <text evidence="5">Probably localizes to intracellular membrane vesicles that are induced after virus infection as the site for viral RNA replication.</text>
</comment>
<comment type="subcellular location">
    <molecule>VPg</molecule>
    <subcellularLocation>
        <location evidence="5">Virion</location>
    </subcellularLocation>
</comment>
<comment type="subcellular location">
    <molecule>Protease 3C</molecule>
    <subcellularLocation>
        <location evidence="5">Host cytoplasm</location>
    </subcellularLocation>
</comment>
<comment type="subcellular location">
    <molecule>RNA-directed RNA polymerase</molecule>
    <subcellularLocation>
        <location evidence="5">Host cytoplasmic vesicle membrane</location>
        <topology evidence="5">Peripheral membrane protein</topology>
        <orientation evidence="5">Cytoplasmic side</orientation>
    </subcellularLocation>
    <text evidence="5">Probably localizes to the surface of intracellular membrane vesicles that are induced after virus infection as the site for viral RNA replication. These vesicles are probably autophagosome-like vesicles.</text>
</comment>
<comment type="PTM">
    <molecule>Genome polyprotein</molecule>
    <text evidence="3 4">Specific enzymatic cleavages by the viral protease in vivo yield a variety of precursors and mature proteins (By similarity). The leader protein-VP0 junction is cleaved by 3C proteinase (By similarity). The VP1/2A junction is cleaved by the protein 3CD in association with protein 2A (By similarity).</text>
</comment>
<comment type="PTM">
    <molecule>VPg</molecule>
    <text evidence="6">Uridylylated by the polymerase and is covalently linked to the 5'-end of genomic RNA. This uridylylated form acts as a nucleotide-peptide primer for the polymerase.</text>
</comment>